<comment type="function">
    <molecule>Corticotropin</molecule>
    <text>Stimulates the adrenal glands to release cortisol.</text>
</comment>
<comment type="function">
    <molecule>Melanocyte-stimulating hormone alpha</molecule>
    <text>Anorexigenic peptide. Increases the pigmentation of skin by increasing melanin production in melanocytes.</text>
</comment>
<comment type="function">
    <molecule>Melanocyte-stimulating hormone beta</molecule>
    <text>Increases the pigmentation of skin by increasing melanin production in melanocytes.</text>
</comment>
<comment type="function">
    <molecule>Beta-endorphin</molecule>
    <text>Endogenous orexigenic opiate.</text>
</comment>
<comment type="function">
    <molecule>Met-enkephalin</molecule>
    <text>Endogenous opiate.</text>
</comment>
<comment type="subcellular location">
    <subcellularLocation>
        <location evidence="2">Secreted</location>
    </subcellularLocation>
    <text evidence="2">Melanocyte-stimulating hormone alpha and beta-endorphin are stored in separate granules in hypothalamic POMC neurons, suggesting that secretion may be under the control of different regulatory mechanisms.</text>
</comment>
<comment type="PTM">
    <text>Specific enzymatic cleavages at paired basic residues yield the different active peptides.</text>
</comment>
<comment type="similarity">
    <text evidence="5">Belongs to the POMC family.</text>
</comment>
<proteinExistence type="evidence at transcript level"/>
<sequence>MLHPVWGCVVAVMGVLWFYSSGVQSQCWEHSQCRDLASEANILECIQACKVDLSAESPLFPGNGHLQPTSEDIQNYVMSHFHWNTFGQRMNGTPGGSKREGASTALSVLLEALSQPRDEVERESEEEEGLQQHRRDDKRSYSMEHFRWGKPVGRKRRPVKVYPNGVEEESAESYPAEIRRDLSLKLDYPQGEELEEVFGGENDLLNLQKKDGSYKMNHFRWSGPPKDKRYGGFMKSWDERSQKPLLTLFKNVMIKDGHEKKGQ</sequence>
<organism>
    <name type="scientific">Acipenser transmontanus</name>
    <name type="common">White sturgeon</name>
    <dbReference type="NCBI Taxonomy" id="7904"/>
    <lineage>
        <taxon>Eukaryota</taxon>
        <taxon>Metazoa</taxon>
        <taxon>Chordata</taxon>
        <taxon>Craniata</taxon>
        <taxon>Vertebrata</taxon>
        <taxon>Euteleostomi</taxon>
        <taxon>Actinopterygii</taxon>
        <taxon>Chondrostei</taxon>
        <taxon>Acipenseriformes</taxon>
        <taxon>Acipenseridae</taxon>
        <taxon>Acipenser</taxon>
    </lineage>
</organism>
<reference key="1">
    <citation type="journal article" date="1997" name="Biochem. Biophys. Res. Commun.">
        <title>Sturgeon proopiomelanocortin has a remnant of gamma-melanotropin.</title>
        <authorList>
            <person name="Amemiya Y."/>
            <person name="Takahashi A."/>
            <person name="Dores R.M."/>
            <person name="Kawauchi H."/>
        </authorList>
    </citation>
    <scope>NUCLEOTIDE SEQUENCE [MRNA]</scope>
    <source>
        <tissue>Pituitary</tissue>
    </source>
</reference>
<evidence type="ECO:0000250" key="1"/>
<evidence type="ECO:0000250" key="2">
    <source>
        <dbReference type="UniProtKB" id="P01193"/>
    </source>
</evidence>
<evidence type="ECO:0000255" key="3"/>
<evidence type="ECO:0000256" key="4">
    <source>
        <dbReference type="SAM" id="MobiDB-lite"/>
    </source>
</evidence>
<evidence type="ECO:0000305" key="5"/>
<protein>
    <recommendedName>
        <fullName>Pro-opiomelanocortin</fullName>
        <shortName>POMC</shortName>
    </recommendedName>
    <alternativeName>
        <fullName>Corticotropin-lipotropin</fullName>
    </alternativeName>
    <component>
        <recommendedName>
            <fullName>NPP</fullName>
        </recommendedName>
    </component>
    <component>
        <recommendedName>
            <fullName>Gamma-melanotropin-like segment</fullName>
        </recommendedName>
    </component>
    <component>
        <recommendedName>
            <fullName>Corticotropin</fullName>
        </recommendedName>
        <alternativeName>
            <fullName>Adrenocorticotropic hormone</fullName>
            <shortName>ACTH</shortName>
        </alternativeName>
    </component>
    <component>
        <recommendedName>
            <fullName>Melanocyte-stimulating hormone alpha</fullName>
            <shortName>Alpha-MSH</shortName>
        </recommendedName>
        <alternativeName>
            <fullName>Melanotropin alpha</fullName>
        </alternativeName>
    </component>
    <component>
        <recommendedName>
            <fullName>Corticotropin-like intermediary peptide</fullName>
            <shortName>CLIP</shortName>
        </recommendedName>
    </component>
    <component>
        <recommendedName>
            <fullName>Melanocyte-stimulating hormone beta</fullName>
            <shortName>Beta-MSH</shortName>
        </recommendedName>
        <alternativeName>
            <fullName>Melanotropin beta</fullName>
        </alternativeName>
    </component>
    <component>
        <recommendedName>
            <fullName>Beta-endorphin</fullName>
        </recommendedName>
    </component>
    <component>
        <recommendedName>
            <fullName>Met-enkephalin</fullName>
        </recommendedName>
    </component>
</protein>
<feature type="signal peptide" evidence="3">
    <location>
        <begin position="1"/>
        <end position="25"/>
    </location>
</feature>
<feature type="peptide" id="PRO_0000025049" description="NPP" evidence="1">
    <location>
        <begin position="26"/>
        <end position="137"/>
    </location>
</feature>
<feature type="peptide" id="PRO_0000025050" description="Gamma-melanotropin-like segment">
    <location>
        <begin position="75"/>
        <end position="97"/>
    </location>
</feature>
<feature type="peptide" id="PRO_0000025051" description="Corticotropin" evidence="1">
    <location>
        <begin position="140"/>
        <end position="178"/>
    </location>
</feature>
<feature type="peptide" id="PRO_0000025052" description="Melanocyte-stimulating hormone alpha">
    <location>
        <begin position="140"/>
        <end position="152"/>
    </location>
</feature>
<feature type="peptide" id="PRO_0000025053" description="Corticotropin-like intermediary peptide" evidence="1">
    <location>
        <begin position="158"/>
        <end position="208"/>
    </location>
</feature>
<feature type="peptide" id="PRO_0000025054" description="Melanocyte-stimulating hormone beta">
    <location>
        <begin position="211"/>
        <end position="227"/>
    </location>
</feature>
<feature type="peptide" id="PRO_0000025055" description="Beta-endorphin">
    <location>
        <begin position="230"/>
        <end position="263"/>
    </location>
</feature>
<feature type="peptide" id="PRO_0000025056" description="Met-enkephalin" evidence="1">
    <location>
        <begin position="230"/>
        <end position="234"/>
    </location>
</feature>
<feature type="region of interest" description="Disordered" evidence="4">
    <location>
        <begin position="114"/>
        <end position="142"/>
    </location>
</feature>
<feature type="compositionally biased region" description="Basic and acidic residues" evidence="4">
    <location>
        <begin position="130"/>
        <end position="142"/>
    </location>
</feature>
<feature type="modified residue" description="Pyrrolidone carboxylic acid" evidence="1">
    <location>
        <position position="26"/>
    </location>
</feature>
<feature type="modified residue" description="Valine amide" evidence="1">
    <location>
        <position position="152"/>
    </location>
</feature>
<feature type="disulfide bond" evidence="1">
    <location>
        <begin position="27"/>
        <end position="49"/>
    </location>
</feature>
<feature type="disulfide bond" evidence="1">
    <location>
        <begin position="33"/>
        <end position="45"/>
    </location>
</feature>
<name>COLI_ACITR</name>
<accession>P87352</accession>
<gene>
    <name type="primary">pomc</name>
</gene>
<keyword id="KW-0027">Amidation</keyword>
<keyword id="KW-0165">Cleavage on pair of basic residues</keyword>
<keyword id="KW-1015">Disulfide bond</keyword>
<keyword id="KW-0257">Endorphin</keyword>
<keyword id="KW-0372">Hormone</keyword>
<keyword id="KW-0873">Pyrrolidone carboxylic acid</keyword>
<keyword id="KW-0964">Secreted</keyword>
<keyword id="KW-0732">Signal</keyword>
<dbReference type="EMBL" id="D88740">
    <property type="protein sequence ID" value="BAA13682.1"/>
    <property type="molecule type" value="mRNA"/>
</dbReference>
<dbReference type="PIR" id="JC5283">
    <property type="entry name" value="JC5283"/>
</dbReference>
<dbReference type="SMR" id="P87352"/>
<dbReference type="GO" id="GO:0005576">
    <property type="term" value="C:extracellular region"/>
    <property type="evidence" value="ECO:0007669"/>
    <property type="project" value="UniProtKB-SubCell"/>
</dbReference>
<dbReference type="GO" id="GO:0005179">
    <property type="term" value="F:hormone activity"/>
    <property type="evidence" value="ECO:0007669"/>
    <property type="project" value="UniProtKB-KW"/>
</dbReference>
<dbReference type="GO" id="GO:0007218">
    <property type="term" value="P:neuropeptide signaling pathway"/>
    <property type="evidence" value="ECO:0007669"/>
    <property type="project" value="UniProtKB-KW"/>
</dbReference>
<dbReference type="InterPro" id="IPR013531">
    <property type="entry name" value="Mcrtin_ACTH_cent"/>
</dbReference>
<dbReference type="InterPro" id="IPR013593">
    <property type="entry name" value="Melanocortin_N"/>
</dbReference>
<dbReference type="InterPro" id="IPR013532">
    <property type="entry name" value="Opioid_neuropept"/>
</dbReference>
<dbReference type="InterPro" id="IPR001941">
    <property type="entry name" value="PMOC"/>
</dbReference>
<dbReference type="InterPro" id="IPR050878">
    <property type="entry name" value="POMC-derived_peptides"/>
</dbReference>
<dbReference type="PANTHER" id="PTHR11416">
    <property type="entry name" value="PRO-OPIOMELANOCORTIN"/>
    <property type="match status" value="1"/>
</dbReference>
<dbReference type="PANTHER" id="PTHR11416:SF7">
    <property type="entry name" value="PRO-OPIOMELANOCORTIN"/>
    <property type="match status" value="1"/>
</dbReference>
<dbReference type="Pfam" id="PF00976">
    <property type="entry name" value="ACTH_domain"/>
    <property type="match status" value="3"/>
</dbReference>
<dbReference type="Pfam" id="PF08384">
    <property type="entry name" value="NPP"/>
    <property type="match status" value="1"/>
</dbReference>
<dbReference type="Pfam" id="PF08035">
    <property type="entry name" value="Op_neuropeptide"/>
    <property type="match status" value="1"/>
</dbReference>
<dbReference type="PRINTS" id="PR00383">
    <property type="entry name" value="MELANOCORTIN"/>
</dbReference>
<dbReference type="SMART" id="SM01363">
    <property type="entry name" value="ACTH_domain"/>
    <property type="match status" value="2"/>
</dbReference>
<dbReference type="SMART" id="SM01364">
    <property type="entry name" value="NPP"/>
    <property type="match status" value="1"/>
</dbReference>
<dbReference type="SMART" id="SM01365">
    <property type="entry name" value="Op_neuropeptide"/>
    <property type="match status" value="1"/>
</dbReference>